<organism>
    <name type="scientific">Arabidopsis thaliana</name>
    <name type="common">Mouse-ear cress</name>
    <dbReference type="NCBI Taxonomy" id="3702"/>
    <lineage>
        <taxon>Eukaryota</taxon>
        <taxon>Viridiplantae</taxon>
        <taxon>Streptophyta</taxon>
        <taxon>Embryophyta</taxon>
        <taxon>Tracheophyta</taxon>
        <taxon>Spermatophyta</taxon>
        <taxon>Magnoliopsida</taxon>
        <taxon>eudicotyledons</taxon>
        <taxon>Gunneridae</taxon>
        <taxon>Pentapetalae</taxon>
        <taxon>rosids</taxon>
        <taxon>malvids</taxon>
        <taxon>Brassicales</taxon>
        <taxon>Brassicaceae</taxon>
        <taxon>Camelineae</taxon>
        <taxon>Arabidopsis</taxon>
    </lineage>
</organism>
<accession>Q8GYB8</accession>
<accession>Q1LYX5</accession>
<accession>Q9ZR80</accession>
<protein>
    <recommendedName>
        <fullName evidence="8">12-oxophytodienoate reductase 2</fullName>
        <ecNumber evidence="3">1.3.1.42</ecNumber>
    </recommendedName>
    <alternativeName>
        <fullName evidence="8">12-oxophytodienoate-10,11-reductase 2</fullName>
        <shortName evidence="8">AtOPR2</shortName>
        <shortName evidence="10">OPDA-reductase 2</shortName>
    </alternativeName>
    <alternativeName>
        <fullName evidence="9">4,5-didehydrojasmonate reductase</fullName>
        <ecNumber evidence="7">1.3.1.-</ecNumber>
    </alternativeName>
</protein>
<feature type="chain" id="PRO_0000194484" description="12-oxophytodienoate reductase 2">
    <location>
        <begin position="1"/>
        <end position="374"/>
    </location>
</feature>
<feature type="active site" description="Proton donor" evidence="1">
    <location>
        <position position="190"/>
    </location>
</feature>
<feature type="binding site" evidence="1">
    <location>
        <begin position="33"/>
        <end position="35"/>
    </location>
    <ligand>
        <name>FMN</name>
        <dbReference type="ChEBI" id="CHEBI:58210"/>
    </ligand>
</feature>
<feature type="binding site" evidence="1">
    <location>
        <position position="66"/>
    </location>
    <ligand>
        <name>FMN</name>
        <dbReference type="ChEBI" id="CHEBI:58210"/>
    </ligand>
</feature>
<feature type="binding site" evidence="1">
    <location>
        <position position="108"/>
    </location>
    <ligand>
        <name>FMN</name>
        <dbReference type="ChEBI" id="CHEBI:58210"/>
    </ligand>
</feature>
<feature type="binding site" evidence="1">
    <location>
        <position position="185"/>
    </location>
    <ligand>
        <name>substrate</name>
    </ligand>
</feature>
<feature type="binding site" evidence="1">
    <location>
        <position position="237"/>
    </location>
    <ligand>
        <name>FMN</name>
        <dbReference type="ChEBI" id="CHEBI:58210"/>
    </ligand>
</feature>
<feature type="binding site" evidence="1">
    <location>
        <position position="277"/>
    </location>
    <ligand>
        <name>substrate</name>
    </ligand>
</feature>
<feature type="binding site" evidence="1">
    <location>
        <begin position="305"/>
        <end position="307"/>
    </location>
    <ligand>
        <name>FMN</name>
        <dbReference type="ChEBI" id="CHEBI:58210"/>
    </ligand>
</feature>
<feature type="binding site" evidence="1">
    <location>
        <begin position="328"/>
        <end position="329"/>
    </location>
    <ligand>
        <name>FMN</name>
        <dbReference type="ChEBI" id="CHEBI:58210"/>
    </ligand>
</feature>
<feature type="modified residue" description="N-acetylmethionine" evidence="14">
    <location>
        <position position="1"/>
    </location>
</feature>
<feature type="sequence conflict" description="In Ref. 4; BAC42387." evidence="10" ref="4">
    <original>A</original>
    <variation>T</variation>
    <location>
        <position position="174"/>
    </location>
</feature>
<sequence length="374" mass="41567">MEMVNAEAKQSVPLLTPYKMGRFNLSHRVVLAPLTRQKSYGSVPQPHAILYYSQRTSPGGFLIAEATGVSDTAQGYPDTPGIWTKEHVEAWKPIVDAVHAKGGIFFCQIWHVGRVSNRGFQPRRQAPISCTGKPIMPQMRANGIDEARFTPPRRLSIEEIPGIVNDFRLAARNAMEAGFDGVEIHGAHGYLIDQFMKDKVNDRTDEYGGSLQNRCKFALEVVDAVAKEIGPDRVGIRLSPFADYMESGDTNPEALGLYMVESLNKYGILYCHMIEPRMKTVGEIAACSHTLMPMREAFKGTFISAGGFTREDGNEAVAKGRTDLVAYGRWFLANPDLPKRFQLDAPLNKYNRSTFYTSDPVVGYTDYPSLESTA</sequence>
<gene>
    <name evidence="8" type="primary">OPR2</name>
    <name evidence="12" type="ordered locus">At1g76690</name>
    <name evidence="13" type="ORF">F28O16.6</name>
</gene>
<keyword id="KW-0007">Acetylation</keyword>
<keyword id="KW-0963">Cytoplasm</keyword>
<keyword id="KW-0275">Fatty acid biosynthesis</keyword>
<keyword id="KW-0276">Fatty acid metabolism</keyword>
<keyword id="KW-0285">Flavoprotein</keyword>
<keyword id="KW-0288">FMN</keyword>
<keyword id="KW-0444">Lipid biosynthesis</keyword>
<keyword id="KW-0443">Lipid metabolism</keyword>
<keyword id="KW-0521">NADP</keyword>
<keyword id="KW-0560">Oxidoreductase</keyword>
<keyword id="KW-0925">Oxylipin biosynthesis</keyword>
<keyword id="KW-1185">Reference proteome</keyword>
<comment type="function">
    <text evidence="3 6 7 11">Specifically cleaves olefinic bonds in alpha,beta-unsaturated carbonyls and may be involved in detoxification or modification of these reactive compounds (Probable). May be involved in the biosynthesis or metabolism of oxylipin signaling molecules (Probable) (PubMed:10872231). In vitro, reduces 9R,13R-12-oxophytodienoic acid (9R,13R-OPDA) to 9R,13R-OPC-8:0, but only poorly 9S,13S-OPDA, the natural precursor of jasmonic acid (JA) (PubMed:10872231). Can detoxify the explosive 2,4,6-trinitrotoluene (TNT) in vitro and in vivo by catalyzing its nitroreduction to form hydroxylamino-dinitrotoluene (HADNT) (PubMed:19605548). Functions in an alternative and OPR3-independent pathway for JA biosynthesis (PubMed:29291349). Catalyzes the NADPH-dependent reduction of 4,5-didehydrojasmonates to jasmonates (PubMed:29291349).</text>
</comment>
<comment type="catalytic activity">
    <reaction evidence="3">
        <text>(1S,2S)-OPC-8 + NADP(+) = (9S,13S,15Z)-12-oxophyto-10,15-dienoate + NADPH + H(+)</text>
        <dbReference type="Rhea" id="RHEA:21888"/>
        <dbReference type="ChEBI" id="CHEBI:15378"/>
        <dbReference type="ChEBI" id="CHEBI:57411"/>
        <dbReference type="ChEBI" id="CHEBI:57783"/>
        <dbReference type="ChEBI" id="CHEBI:58349"/>
        <dbReference type="ChEBI" id="CHEBI:191855"/>
        <dbReference type="EC" id="1.3.1.42"/>
    </reaction>
</comment>
<comment type="catalytic activity">
    <reaction evidence="7">
        <text>a 4,5-didehydrojasmonate + NADPH + H(+) = a jasmonate + NADP(+)</text>
        <dbReference type="Rhea" id="RHEA:58072"/>
        <dbReference type="ChEBI" id="CHEBI:15378"/>
        <dbReference type="ChEBI" id="CHEBI:57783"/>
        <dbReference type="ChEBI" id="CHEBI:58349"/>
        <dbReference type="ChEBI" id="CHEBI:136184"/>
        <dbReference type="ChEBI" id="CHEBI:142502"/>
    </reaction>
</comment>
<comment type="cofactor">
    <cofactor evidence="3">
        <name>FMN</name>
        <dbReference type="ChEBI" id="CHEBI:58210"/>
    </cofactor>
</comment>
<comment type="biophysicochemical properties">
    <kinetics>
        <KM evidence="7">218 uM for 4,5-didehydrojasmonate</KM>
        <text evidence="7">kcat is 0.819 sec(-1) with 4,5-didehydrojasmonate as substrate.</text>
    </kinetics>
</comment>
<comment type="pathway">
    <text evidence="10">Lipid metabolism; oxylipin biosynthesis.</text>
</comment>
<comment type="subcellular location">
    <subcellularLocation>
        <location evidence="4">Cytoplasm</location>
    </subcellularLocation>
</comment>
<comment type="tissue specificity">
    <text evidence="2">Expressed at highest levels in roots and cotyledons, and at lower levels in leaves, shoots and flowers (sepals, petals, maturing siliques and developing pollen).</text>
</comment>
<comment type="developmental stage">
    <text evidence="2">Expressed during late steps of pollen development.</text>
</comment>
<comment type="induction">
    <text evidence="2 5 6">By wounding, locally and systemically, by cold and heat stresses, and by UV-C. Seems to not be influenced by UV-A and UV-B. Induced by the chloroacetanilide herbicides acetochlor and metolachlor, and the explosives 2,4,6-trinitrotoluene (TNT) and hexahydro-1,3,5-trinitro-1,3,5-triazine (RDX).</text>
</comment>
<comment type="similarity">
    <text evidence="10">Belongs to the NADH:flavin oxidoreductase/NADH oxidase family.</text>
</comment>
<reference key="1">
    <citation type="journal article" date="1999" name="Planta">
        <title>Structure and regulation of OPR1 and OPR2, two closely related genes encoding 12-oxophytodienoic acid-10,11-reductases from Arabidopsis thaliana.</title>
        <authorList>
            <person name="Biesgen C."/>
            <person name="Weiler E.W."/>
        </authorList>
    </citation>
    <scope>NUCLEOTIDE SEQUENCE [GENOMIC DNA]</scope>
    <scope>TISSUE SPECIFICITY</scope>
    <scope>DEVELOPMENTAL STAGE</scope>
    <scope>INDUCTION</scope>
    <source>
        <strain>cv. Columbia</strain>
    </source>
</reference>
<reference key="2">
    <citation type="journal article" date="2000" name="Nature">
        <title>Sequence and analysis of chromosome 1 of the plant Arabidopsis thaliana.</title>
        <authorList>
            <person name="Theologis A."/>
            <person name="Ecker J.R."/>
            <person name="Palm C.J."/>
            <person name="Federspiel N.A."/>
            <person name="Kaul S."/>
            <person name="White O."/>
            <person name="Alonso J."/>
            <person name="Altafi H."/>
            <person name="Araujo R."/>
            <person name="Bowman C.L."/>
            <person name="Brooks S.Y."/>
            <person name="Buehler E."/>
            <person name="Chan A."/>
            <person name="Chao Q."/>
            <person name="Chen H."/>
            <person name="Cheuk R.F."/>
            <person name="Chin C.W."/>
            <person name="Chung M.K."/>
            <person name="Conn L."/>
            <person name="Conway A.B."/>
            <person name="Conway A.R."/>
            <person name="Creasy T.H."/>
            <person name="Dewar K."/>
            <person name="Dunn P."/>
            <person name="Etgu P."/>
            <person name="Feldblyum T.V."/>
            <person name="Feng J.-D."/>
            <person name="Fong B."/>
            <person name="Fujii C.Y."/>
            <person name="Gill J.E."/>
            <person name="Goldsmith A.D."/>
            <person name="Haas B."/>
            <person name="Hansen N.F."/>
            <person name="Hughes B."/>
            <person name="Huizar L."/>
            <person name="Hunter J.L."/>
            <person name="Jenkins J."/>
            <person name="Johnson-Hopson C."/>
            <person name="Khan S."/>
            <person name="Khaykin E."/>
            <person name="Kim C.J."/>
            <person name="Koo H.L."/>
            <person name="Kremenetskaia I."/>
            <person name="Kurtz D.B."/>
            <person name="Kwan A."/>
            <person name="Lam B."/>
            <person name="Langin-Hooper S."/>
            <person name="Lee A."/>
            <person name="Lee J.M."/>
            <person name="Lenz C.A."/>
            <person name="Li J.H."/>
            <person name="Li Y.-P."/>
            <person name="Lin X."/>
            <person name="Liu S.X."/>
            <person name="Liu Z.A."/>
            <person name="Luros J.S."/>
            <person name="Maiti R."/>
            <person name="Marziali A."/>
            <person name="Militscher J."/>
            <person name="Miranda M."/>
            <person name="Nguyen M."/>
            <person name="Nierman W.C."/>
            <person name="Osborne B.I."/>
            <person name="Pai G."/>
            <person name="Peterson J."/>
            <person name="Pham P.K."/>
            <person name="Rizzo M."/>
            <person name="Rooney T."/>
            <person name="Rowley D."/>
            <person name="Sakano H."/>
            <person name="Salzberg S.L."/>
            <person name="Schwartz J.R."/>
            <person name="Shinn P."/>
            <person name="Southwick A.M."/>
            <person name="Sun H."/>
            <person name="Tallon L.J."/>
            <person name="Tambunga G."/>
            <person name="Toriumi M.J."/>
            <person name="Town C.D."/>
            <person name="Utterback T."/>
            <person name="Van Aken S."/>
            <person name="Vaysberg M."/>
            <person name="Vysotskaia V.S."/>
            <person name="Walker M."/>
            <person name="Wu D."/>
            <person name="Yu G."/>
            <person name="Fraser C.M."/>
            <person name="Venter J.C."/>
            <person name="Davis R.W."/>
        </authorList>
    </citation>
    <scope>NUCLEOTIDE SEQUENCE [LARGE SCALE GENOMIC DNA]</scope>
    <source>
        <strain>cv. Columbia</strain>
    </source>
</reference>
<reference key="3">
    <citation type="journal article" date="2017" name="Plant J.">
        <title>Araport11: a complete reannotation of the Arabidopsis thaliana reference genome.</title>
        <authorList>
            <person name="Cheng C.Y."/>
            <person name="Krishnakumar V."/>
            <person name="Chan A.P."/>
            <person name="Thibaud-Nissen F."/>
            <person name="Schobel S."/>
            <person name="Town C.D."/>
        </authorList>
    </citation>
    <scope>GENOME REANNOTATION</scope>
    <source>
        <strain>cv. Columbia</strain>
    </source>
</reference>
<reference key="4">
    <citation type="journal article" date="2002" name="Science">
        <title>Functional annotation of a full-length Arabidopsis cDNA collection.</title>
        <authorList>
            <person name="Seki M."/>
            <person name="Narusaka M."/>
            <person name="Kamiya A."/>
            <person name="Ishida J."/>
            <person name="Satou M."/>
            <person name="Sakurai T."/>
            <person name="Nakajima M."/>
            <person name="Enju A."/>
            <person name="Akiyama K."/>
            <person name="Oono Y."/>
            <person name="Muramatsu M."/>
            <person name="Hayashizaki Y."/>
            <person name="Kawai J."/>
            <person name="Carninci P."/>
            <person name="Itoh M."/>
            <person name="Ishii Y."/>
            <person name="Arakawa T."/>
            <person name="Shibata K."/>
            <person name="Shinagawa A."/>
            <person name="Shinozaki K."/>
        </authorList>
    </citation>
    <scope>NUCLEOTIDE SEQUENCE [LARGE SCALE MRNA]</scope>
    <source>
        <strain>cv. Columbia</strain>
    </source>
</reference>
<reference key="5">
    <citation type="submission" date="2006-04" db="EMBL/GenBank/DDBJ databases">
        <title>Arabidopsis ORF clones.</title>
        <authorList>
            <person name="Shinn P."/>
            <person name="Chen H."/>
            <person name="Kim C.J."/>
            <person name="Quinitio C."/>
            <person name="Ecker J.R."/>
        </authorList>
    </citation>
    <scope>NUCLEOTIDE SEQUENCE [LARGE SCALE MRNA]</scope>
    <source>
        <strain>cv. Columbia</strain>
    </source>
</reference>
<reference key="6">
    <citation type="journal article" date="2000" name="Planta">
        <title>12-Oxophytodienoate reductase 3 (OPR3) is the isoenzyme involved in jasmonate biosynthesis.</title>
        <authorList>
            <person name="Schaller F."/>
            <person name="Biesgen C."/>
            <person name="Muessig C."/>
            <person name="Altmann T."/>
            <person name="Weiler E.W."/>
        </authorList>
    </citation>
    <scope>FUNCTION</scope>
    <scope>CATALYTIC ACTIVITY</scope>
    <scope>SUBSTRATE SPECIFICITY</scope>
    <scope>COFACTOR</scope>
</reference>
<reference key="7">
    <citation type="journal article" date="2002" name="Plant J.">
        <title>Characterization and cDNA-microarray expression analysis of 12-oxophytodienoate reductases reveals differential roles for octadecanoid biosynthesis in the local versus the systemic wound response.</title>
        <authorList>
            <person name="Strassner J."/>
            <person name="Schaller F."/>
            <person name="Frick U.B."/>
            <person name="Howe G.A."/>
            <person name="Weiler E.W."/>
            <person name="Amrhein N."/>
            <person name="Macheroux P."/>
            <person name="Schaller A."/>
        </authorList>
    </citation>
    <scope>SUBCELLULAR LOCATION</scope>
</reference>
<reference key="8">
    <citation type="journal article" date="2005" name="Plant Physiol.">
        <title>Gene expression and microscopic analysis of Arabidopsis exposed to chloroacetanilide herbicides and explosive compounds. A phytoremediation approach.</title>
        <authorList>
            <person name="Mezzari M.P."/>
            <person name="Walters K."/>
            <person name="Jelinkova M."/>
            <person name="Shih M.C."/>
            <person name="Just C.L."/>
            <person name="Schnoor J.L."/>
        </authorList>
    </citation>
    <scope>INDUCTION</scope>
</reference>
<reference key="9">
    <citation type="journal article" date="2009" name="Plant Physiol.">
        <title>The role of oxophytodienoate reductases in the detoxification of the explosive 2,4,6-trinitrotoluene by Arabidopsis.</title>
        <authorList>
            <person name="Beynon E.R."/>
            <person name="Symons Z.C."/>
            <person name="Jackson R.G."/>
            <person name="Lorenz A."/>
            <person name="Rylott E.L."/>
            <person name="Bruce N.C."/>
        </authorList>
    </citation>
    <scope>FUNCTION</scope>
    <scope>INDUCTION</scope>
</reference>
<reference key="10">
    <citation type="journal article" date="2012" name="Mol. Cell. Proteomics">
        <title>Comparative large-scale characterisation of plant vs. mammal proteins reveals similar and idiosyncratic N-alpha acetylation features.</title>
        <authorList>
            <person name="Bienvenut W.V."/>
            <person name="Sumpton D."/>
            <person name="Martinez A."/>
            <person name="Lilla S."/>
            <person name="Espagne C."/>
            <person name="Meinnel T."/>
            <person name="Giglione C."/>
        </authorList>
    </citation>
    <scope>ACETYLATION [LARGE SCALE ANALYSIS] AT MET-1</scope>
    <scope>IDENTIFICATION BY MASS SPECTROMETRY [LARGE SCALE ANALYSIS]</scope>
</reference>
<reference key="11">
    <citation type="journal article" date="2018" name="Nat. Chem. Biol.">
        <title>An OPR3-independent pathway uses 4,5-didehydrojasmonate for jasmonate synthesis.</title>
        <authorList>
            <person name="Chini A."/>
            <person name="Monte I."/>
            <person name="Zamarreno A.M."/>
            <person name="Hamberg M."/>
            <person name="Lassueur S."/>
            <person name="Reymond P."/>
            <person name="Weiss S."/>
            <person name="Stintzi A."/>
            <person name="Schaller A."/>
            <person name="Porzel A."/>
            <person name="Garcia-Mina J.M."/>
            <person name="Solano R."/>
        </authorList>
    </citation>
    <scope>FUNCTION</scope>
    <scope>CATALYTIC ACTIVITY</scope>
    <scope>BIOPHYSICOCHEMICAL PROPERTIES</scope>
</reference>
<name>OPR2_ARATH</name>
<dbReference type="EC" id="1.3.1.42" evidence="3"/>
<dbReference type="EC" id="1.3.1.-" evidence="7"/>
<dbReference type="EMBL" id="U92460">
    <property type="protein sequence ID" value="AAC78441.1"/>
    <property type="molecule type" value="Genomic_DNA"/>
</dbReference>
<dbReference type="EMBL" id="AC010718">
    <property type="protein sequence ID" value="AAF04449.1"/>
    <property type="molecule type" value="Genomic_DNA"/>
</dbReference>
<dbReference type="EMBL" id="CP002684">
    <property type="protein sequence ID" value="AEE35876.1"/>
    <property type="molecule type" value="Genomic_DNA"/>
</dbReference>
<dbReference type="EMBL" id="AK117738">
    <property type="protein sequence ID" value="BAC42387.1"/>
    <property type="molecule type" value="mRNA"/>
</dbReference>
<dbReference type="EMBL" id="BT025251">
    <property type="protein sequence ID" value="ABF19004.1"/>
    <property type="molecule type" value="mRNA"/>
</dbReference>
<dbReference type="PIR" id="C96795">
    <property type="entry name" value="C96795"/>
</dbReference>
<dbReference type="RefSeq" id="NP_177795.1">
    <property type="nucleotide sequence ID" value="NM_106319.5"/>
</dbReference>
<dbReference type="SMR" id="Q8GYB8"/>
<dbReference type="FunCoup" id="Q8GYB8">
    <property type="interactions" value="246"/>
</dbReference>
<dbReference type="STRING" id="3702.Q8GYB8"/>
<dbReference type="iPTMnet" id="Q8GYB8"/>
<dbReference type="PaxDb" id="3702-AT1G76690.1"/>
<dbReference type="ProteomicsDB" id="248760"/>
<dbReference type="EnsemblPlants" id="AT1G76690.1">
    <property type="protein sequence ID" value="AT1G76690.1"/>
    <property type="gene ID" value="AT1G76690"/>
</dbReference>
<dbReference type="GeneID" id="844002"/>
<dbReference type="Gramene" id="AT1G76690.1">
    <property type="protein sequence ID" value="AT1G76690.1"/>
    <property type="gene ID" value="AT1G76690"/>
</dbReference>
<dbReference type="KEGG" id="ath:AT1G76690"/>
<dbReference type="Araport" id="AT1G76690"/>
<dbReference type="TAIR" id="AT1G76690">
    <property type="gene designation" value="OPR2"/>
</dbReference>
<dbReference type="eggNOG" id="KOG0134">
    <property type="taxonomic scope" value="Eukaryota"/>
</dbReference>
<dbReference type="HOGENOM" id="CLU_012153_0_0_1"/>
<dbReference type="InParanoid" id="Q8GYB8"/>
<dbReference type="OMA" id="MMATYYK"/>
<dbReference type="OrthoDB" id="1663137at2759"/>
<dbReference type="PhylomeDB" id="Q8GYB8"/>
<dbReference type="BioCyc" id="ARA:AT1G76690-MONOMER"/>
<dbReference type="BRENDA" id="1.3.1.42">
    <property type="organism ID" value="399"/>
</dbReference>
<dbReference type="UniPathway" id="UPA00382"/>
<dbReference type="PRO" id="PR:Q8GYB8"/>
<dbReference type="Proteomes" id="UP000006548">
    <property type="component" value="Chromosome 1"/>
</dbReference>
<dbReference type="ExpressionAtlas" id="Q8GYB8">
    <property type="expression patterns" value="baseline and differential"/>
</dbReference>
<dbReference type="GO" id="GO:0005737">
    <property type="term" value="C:cytoplasm"/>
    <property type="evidence" value="ECO:0000314"/>
    <property type="project" value="UniProtKB"/>
</dbReference>
<dbReference type="GO" id="GO:0005739">
    <property type="term" value="C:mitochondrion"/>
    <property type="evidence" value="ECO:0007005"/>
    <property type="project" value="TAIR"/>
</dbReference>
<dbReference type="GO" id="GO:0016629">
    <property type="term" value="F:12-oxophytodienoate reductase activity"/>
    <property type="evidence" value="ECO:0000314"/>
    <property type="project" value="UniProtKB"/>
</dbReference>
<dbReference type="GO" id="GO:0010181">
    <property type="term" value="F:FMN binding"/>
    <property type="evidence" value="ECO:0007669"/>
    <property type="project" value="InterPro"/>
</dbReference>
<dbReference type="GO" id="GO:0009695">
    <property type="term" value="P:jasmonic acid biosynthetic process"/>
    <property type="evidence" value="ECO:0000314"/>
    <property type="project" value="UniProtKB"/>
</dbReference>
<dbReference type="GO" id="GO:0031408">
    <property type="term" value="P:oxylipin biosynthetic process"/>
    <property type="evidence" value="ECO:0007669"/>
    <property type="project" value="UniProtKB-UniPathway"/>
</dbReference>
<dbReference type="GO" id="GO:0009611">
    <property type="term" value="P:response to wounding"/>
    <property type="evidence" value="ECO:0000270"/>
    <property type="project" value="TAIR"/>
</dbReference>
<dbReference type="CDD" id="cd02933">
    <property type="entry name" value="OYE_like_FMN"/>
    <property type="match status" value="1"/>
</dbReference>
<dbReference type="FunFam" id="3.20.20.70:FF:000073">
    <property type="entry name" value="12-oxophytodienoate reductase 3"/>
    <property type="match status" value="1"/>
</dbReference>
<dbReference type="Gene3D" id="3.20.20.70">
    <property type="entry name" value="Aldolase class I"/>
    <property type="match status" value="1"/>
</dbReference>
<dbReference type="InterPro" id="IPR013785">
    <property type="entry name" value="Aldolase_TIM"/>
</dbReference>
<dbReference type="InterPro" id="IPR001155">
    <property type="entry name" value="OxRdtase_FMN_N"/>
</dbReference>
<dbReference type="InterPro" id="IPR045247">
    <property type="entry name" value="Oye-like"/>
</dbReference>
<dbReference type="PANTHER" id="PTHR22893">
    <property type="entry name" value="NADH OXIDOREDUCTASE-RELATED"/>
    <property type="match status" value="1"/>
</dbReference>
<dbReference type="PANTHER" id="PTHR22893:SF91">
    <property type="entry name" value="NADPH DEHYDROGENASE 2-RELATED"/>
    <property type="match status" value="1"/>
</dbReference>
<dbReference type="Pfam" id="PF00724">
    <property type="entry name" value="Oxidored_FMN"/>
    <property type="match status" value="1"/>
</dbReference>
<dbReference type="SUPFAM" id="SSF51395">
    <property type="entry name" value="FMN-linked oxidoreductases"/>
    <property type="match status" value="1"/>
</dbReference>
<proteinExistence type="evidence at protein level"/>
<evidence type="ECO:0000250" key="1">
    <source>
        <dbReference type="UniProtKB" id="Q9FUP0"/>
    </source>
</evidence>
<evidence type="ECO:0000269" key="2">
    <source>
    </source>
</evidence>
<evidence type="ECO:0000269" key="3">
    <source>
    </source>
</evidence>
<evidence type="ECO:0000269" key="4">
    <source>
    </source>
</evidence>
<evidence type="ECO:0000269" key="5">
    <source>
    </source>
</evidence>
<evidence type="ECO:0000269" key="6">
    <source>
    </source>
</evidence>
<evidence type="ECO:0000269" key="7">
    <source>
    </source>
</evidence>
<evidence type="ECO:0000303" key="8">
    <source>
    </source>
</evidence>
<evidence type="ECO:0000303" key="9">
    <source>
    </source>
</evidence>
<evidence type="ECO:0000305" key="10"/>
<evidence type="ECO:0000305" key="11">
    <source>
    </source>
</evidence>
<evidence type="ECO:0000312" key="12">
    <source>
        <dbReference type="Araport" id="AT1G76690"/>
    </source>
</evidence>
<evidence type="ECO:0000312" key="13">
    <source>
        <dbReference type="EMBL" id="AAF04449.1"/>
    </source>
</evidence>
<evidence type="ECO:0007744" key="14">
    <source>
    </source>
</evidence>